<gene>
    <name evidence="1" type="primary">atpF</name>
</gene>
<keyword id="KW-0066">ATP synthesis</keyword>
<keyword id="KW-0067">ATP-binding</keyword>
<keyword id="KW-0138">CF(0)</keyword>
<keyword id="KW-0150">Chloroplast</keyword>
<keyword id="KW-0375">Hydrogen ion transport</keyword>
<keyword id="KW-0406">Ion transport</keyword>
<keyword id="KW-0472">Membrane</keyword>
<keyword id="KW-0547">Nucleotide-binding</keyword>
<keyword id="KW-0934">Plastid</keyword>
<keyword id="KW-1185">Reference proteome</keyword>
<keyword id="KW-0793">Thylakoid</keyword>
<keyword id="KW-0812">Transmembrane</keyword>
<keyword id="KW-1133">Transmembrane helix</keyword>
<keyword id="KW-0813">Transport</keyword>
<accession>P0C2Y9</accession>
<accession>P12087</accession>
<accession>Q6QXV1</accession>
<proteinExistence type="inferred from homology"/>
<protein>
    <recommendedName>
        <fullName evidence="1">ATP synthase subunit b, chloroplastic</fullName>
    </recommendedName>
    <alternativeName>
        <fullName evidence="1">ATP synthase F(0) sector subunit b</fullName>
    </alternativeName>
    <alternativeName>
        <fullName evidence="1">ATPase subunit I</fullName>
    </alternativeName>
</protein>
<geneLocation type="chloroplast"/>
<name>ATPF_ORYSI</name>
<comment type="function">
    <text evidence="1">F(1)F(0) ATP synthase produces ATP from ADP in the presence of a proton or sodium gradient. F-type ATPases consist of two structural domains, F(1) containing the extramembraneous catalytic core and F(0) containing the membrane proton channel, linked together by a central stalk and a peripheral stalk. During catalysis, ATP synthesis in the catalytic domain of F(1) is coupled via a rotary mechanism of the central stalk subunits to proton translocation.</text>
</comment>
<comment type="function">
    <text evidence="1">Component of the F(0) channel, it forms part of the peripheral stalk, linking F(1) to F(0).</text>
</comment>
<comment type="subunit">
    <text evidence="1">F-type ATPases have 2 components, F(1) - the catalytic core - and F(0) - the membrane proton channel. F(1) has five subunits: alpha(3), beta(3), gamma(1), delta(1), epsilon(1). F(0) has four main subunits: a(1), b(1), b'(1) and c(10-14). The alpha and beta chains form an alternating ring which encloses part of the gamma chain. F(1) is attached to F(0) by a central stalk formed by the gamma and epsilon chains, while a peripheral stalk is formed by the delta, b and b' chains.</text>
</comment>
<comment type="subcellular location">
    <subcellularLocation>
        <location evidence="1">Plastid</location>
        <location evidence="1">Chloroplast thylakoid membrane</location>
        <topology evidence="1">Single-pass membrane protein</topology>
    </subcellularLocation>
</comment>
<comment type="miscellaneous">
    <text>In plastids the F-type ATPase is also known as CF(1)CF(0).</text>
</comment>
<comment type="similarity">
    <text evidence="1">Belongs to the ATPase B chain family.</text>
</comment>
<reference key="1">
    <citation type="journal article" date="2004" name="Plant Physiol.">
        <title>A comparison of rice chloroplast genomes.</title>
        <authorList>
            <person name="Tang J."/>
            <person name="Xia H."/>
            <person name="Cao M."/>
            <person name="Zhang X."/>
            <person name="Zeng W."/>
            <person name="Hu S."/>
            <person name="Tong W."/>
            <person name="Wang J."/>
            <person name="Wang J."/>
            <person name="Yu J."/>
            <person name="Yang H."/>
            <person name="Zhu L."/>
        </authorList>
    </citation>
    <scope>NUCLEOTIDE SEQUENCE [LARGE SCALE GENOMIC DNA]</scope>
    <source>
        <strain>cv. 93-11</strain>
    </source>
</reference>
<feature type="chain" id="PRO_0000288516" description="ATP synthase subunit b, chloroplastic">
    <location>
        <begin position="1"/>
        <end position="183"/>
    </location>
</feature>
<feature type="transmembrane region" description="Helical" evidence="1">
    <location>
        <begin position="27"/>
        <end position="49"/>
    </location>
</feature>
<organism>
    <name type="scientific">Oryza sativa subsp. indica</name>
    <name type="common">Rice</name>
    <dbReference type="NCBI Taxonomy" id="39946"/>
    <lineage>
        <taxon>Eukaryota</taxon>
        <taxon>Viridiplantae</taxon>
        <taxon>Streptophyta</taxon>
        <taxon>Embryophyta</taxon>
        <taxon>Tracheophyta</taxon>
        <taxon>Spermatophyta</taxon>
        <taxon>Magnoliopsida</taxon>
        <taxon>Liliopsida</taxon>
        <taxon>Poales</taxon>
        <taxon>Poaceae</taxon>
        <taxon>BOP clade</taxon>
        <taxon>Oryzoideae</taxon>
        <taxon>Oryzeae</taxon>
        <taxon>Oryzinae</taxon>
        <taxon>Oryza</taxon>
        <taxon>Oryza sativa</taxon>
    </lineage>
</organism>
<sequence length="183" mass="20956">MKNVTHSFVFLAHWPSAGSFGLNTDILATNLINLTVVVGVLIYFGKGVLKDLLDNRKQRILSTIRNSEELRRGTIEQLEKARIRLQKVELEADEYRMNGYSEIEREKANLINATSISLEQLEKSKNETLYFEKQRAMNQVRQRVFQQAVQGALGTLNSCLNTELHFRTIRANISILGAMEWKS</sequence>
<evidence type="ECO:0000255" key="1">
    <source>
        <dbReference type="HAMAP-Rule" id="MF_01398"/>
    </source>
</evidence>
<dbReference type="EMBL" id="AY522329">
    <property type="status" value="NOT_ANNOTATED_CDS"/>
    <property type="molecule type" value="Genomic_DNA"/>
</dbReference>
<dbReference type="SMR" id="P0C2Y9"/>
<dbReference type="STRING" id="39946.P0C2Y9"/>
<dbReference type="Proteomes" id="UP000007015">
    <property type="component" value="Chloroplast"/>
</dbReference>
<dbReference type="GO" id="GO:0009535">
    <property type="term" value="C:chloroplast thylakoid membrane"/>
    <property type="evidence" value="ECO:0007669"/>
    <property type="project" value="UniProtKB-SubCell"/>
</dbReference>
<dbReference type="GO" id="GO:0009536">
    <property type="term" value="C:plastid"/>
    <property type="evidence" value="ECO:0000305"/>
    <property type="project" value="Gramene"/>
</dbReference>
<dbReference type="GO" id="GO:0045259">
    <property type="term" value="C:proton-transporting ATP synthase complex"/>
    <property type="evidence" value="ECO:0007669"/>
    <property type="project" value="UniProtKB-KW"/>
</dbReference>
<dbReference type="GO" id="GO:0005524">
    <property type="term" value="F:ATP binding"/>
    <property type="evidence" value="ECO:0007669"/>
    <property type="project" value="UniProtKB-KW"/>
</dbReference>
<dbReference type="GO" id="GO:0046933">
    <property type="term" value="F:proton-transporting ATP synthase activity, rotational mechanism"/>
    <property type="evidence" value="ECO:0007669"/>
    <property type="project" value="UniProtKB-UniRule"/>
</dbReference>
<dbReference type="CDD" id="cd06503">
    <property type="entry name" value="ATP-synt_Fo_b"/>
    <property type="match status" value="1"/>
</dbReference>
<dbReference type="HAMAP" id="MF_01398">
    <property type="entry name" value="ATP_synth_b_bprime"/>
    <property type="match status" value="1"/>
</dbReference>
<dbReference type="InterPro" id="IPR002146">
    <property type="entry name" value="ATP_synth_b/b'su_bac/chlpt"/>
</dbReference>
<dbReference type="PANTHER" id="PTHR34264">
    <property type="entry name" value="ATP SYNTHASE SUBUNIT B, CHLOROPLASTIC"/>
    <property type="match status" value="1"/>
</dbReference>
<dbReference type="PANTHER" id="PTHR34264:SF8">
    <property type="entry name" value="ATP SYNTHASE SUBUNIT B, CHLOROPLASTIC"/>
    <property type="match status" value="1"/>
</dbReference>
<dbReference type="Pfam" id="PF00430">
    <property type="entry name" value="ATP-synt_B"/>
    <property type="match status" value="1"/>
</dbReference>